<gene>
    <name evidence="1" type="primary">moaA</name>
    <name type="ordered locus">Msed_1609</name>
</gene>
<keyword id="KW-0004">4Fe-4S</keyword>
<keyword id="KW-0342">GTP-binding</keyword>
<keyword id="KW-0408">Iron</keyword>
<keyword id="KW-0411">Iron-sulfur</keyword>
<keyword id="KW-0456">Lyase</keyword>
<keyword id="KW-0479">Metal-binding</keyword>
<keyword id="KW-0501">Molybdenum cofactor biosynthesis</keyword>
<keyword id="KW-0547">Nucleotide-binding</keyword>
<keyword id="KW-1185">Reference proteome</keyword>
<keyword id="KW-0949">S-adenosyl-L-methionine</keyword>
<accession>A4YH62</accession>
<evidence type="ECO:0000255" key="1">
    <source>
        <dbReference type="HAMAP-Rule" id="MF_01225"/>
    </source>
</evidence>
<evidence type="ECO:0000255" key="2">
    <source>
        <dbReference type="PROSITE-ProRule" id="PRU01266"/>
    </source>
</evidence>
<name>MOAA_METS5</name>
<protein>
    <recommendedName>
        <fullName evidence="1">Probable GTP 3',8-cyclase</fullName>
        <ecNumber evidence="1">4.1.99.22</ecNumber>
    </recommendedName>
    <alternativeName>
        <fullName evidence="1">Molybdenum cofactor biosynthesis protein A</fullName>
    </alternativeName>
</protein>
<feature type="chain" id="PRO_1000073165" description="Probable GTP 3',8-cyclase">
    <location>
        <begin position="1"/>
        <end position="317"/>
    </location>
</feature>
<feature type="domain" description="Radical SAM core" evidence="2">
    <location>
        <begin position="4"/>
        <end position="223"/>
    </location>
</feature>
<feature type="binding site" evidence="1">
    <location>
        <position position="13"/>
    </location>
    <ligand>
        <name>GTP</name>
        <dbReference type="ChEBI" id="CHEBI:37565"/>
    </ligand>
</feature>
<feature type="binding site" evidence="1">
    <location>
        <position position="20"/>
    </location>
    <ligand>
        <name>[4Fe-4S] cluster</name>
        <dbReference type="ChEBI" id="CHEBI:49883"/>
        <label>1</label>
        <note>4Fe-4S-S-AdoMet</note>
    </ligand>
</feature>
<feature type="binding site" evidence="1">
    <location>
        <position position="24"/>
    </location>
    <ligand>
        <name>[4Fe-4S] cluster</name>
        <dbReference type="ChEBI" id="CHEBI:49883"/>
        <label>1</label>
        <note>4Fe-4S-S-AdoMet</note>
    </ligand>
</feature>
<feature type="binding site" evidence="1">
    <location>
        <position position="27"/>
    </location>
    <ligand>
        <name>[4Fe-4S] cluster</name>
        <dbReference type="ChEBI" id="CHEBI:49883"/>
        <label>1</label>
        <note>4Fe-4S-S-AdoMet</note>
    </ligand>
</feature>
<feature type="binding site" evidence="1">
    <location>
        <position position="61"/>
    </location>
    <ligand>
        <name>GTP</name>
        <dbReference type="ChEBI" id="CHEBI:37565"/>
    </ligand>
</feature>
<feature type="binding site" evidence="1">
    <location>
        <position position="65"/>
    </location>
    <ligand>
        <name>S-adenosyl-L-methionine</name>
        <dbReference type="ChEBI" id="CHEBI:59789"/>
    </ligand>
</feature>
<feature type="binding site" evidence="1">
    <location>
        <position position="91"/>
    </location>
    <ligand>
        <name>GTP</name>
        <dbReference type="ChEBI" id="CHEBI:37565"/>
    </ligand>
</feature>
<feature type="binding site" evidence="1">
    <location>
        <position position="115"/>
    </location>
    <ligand>
        <name>S-adenosyl-L-methionine</name>
        <dbReference type="ChEBI" id="CHEBI:59789"/>
    </ligand>
</feature>
<feature type="binding site" evidence="1">
    <location>
        <position position="152"/>
    </location>
    <ligand>
        <name>GTP</name>
        <dbReference type="ChEBI" id="CHEBI:37565"/>
    </ligand>
</feature>
<feature type="binding site" evidence="1">
    <location>
        <position position="246"/>
    </location>
    <ligand>
        <name>[4Fe-4S] cluster</name>
        <dbReference type="ChEBI" id="CHEBI:49883"/>
        <label>2</label>
        <note>4Fe-4S-substrate</note>
    </ligand>
</feature>
<feature type="binding site" evidence="1">
    <location>
        <position position="249"/>
    </location>
    <ligand>
        <name>[4Fe-4S] cluster</name>
        <dbReference type="ChEBI" id="CHEBI:49883"/>
        <label>2</label>
        <note>4Fe-4S-substrate</note>
    </ligand>
</feature>
<feature type="binding site" evidence="1">
    <location>
        <begin position="251"/>
        <end position="253"/>
    </location>
    <ligand>
        <name>GTP</name>
        <dbReference type="ChEBI" id="CHEBI:37565"/>
    </ligand>
</feature>
<feature type="binding site" evidence="1">
    <location>
        <position position="263"/>
    </location>
    <ligand>
        <name>[4Fe-4S] cluster</name>
        <dbReference type="ChEBI" id="CHEBI:49883"/>
        <label>2</label>
        <note>4Fe-4S-substrate</note>
    </ligand>
</feature>
<proteinExistence type="inferred from homology"/>
<dbReference type="EC" id="4.1.99.22" evidence="1"/>
<dbReference type="EMBL" id="CP000682">
    <property type="protein sequence ID" value="ABP95764.1"/>
    <property type="molecule type" value="Genomic_DNA"/>
</dbReference>
<dbReference type="RefSeq" id="WP_012021551.1">
    <property type="nucleotide sequence ID" value="NC_009440.1"/>
</dbReference>
<dbReference type="SMR" id="A4YH62"/>
<dbReference type="STRING" id="399549.Msed_1609"/>
<dbReference type="GeneID" id="91756116"/>
<dbReference type="KEGG" id="mse:Msed_1609"/>
<dbReference type="eggNOG" id="arCOG00930">
    <property type="taxonomic scope" value="Archaea"/>
</dbReference>
<dbReference type="HOGENOM" id="CLU_009273_0_1_2"/>
<dbReference type="UniPathway" id="UPA00344"/>
<dbReference type="Proteomes" id="UP000000242">
    <property type="component" value="Chromosome"/>
</dbReference>
<dbReference type="GO" id="GO:0051539">
    <property type="term" value="F:4 iron, 4 sulfur cluster binding"/>
    <property type="evidence" value="ECO:0007669"/>
    <property type="project" value="UniProtKB-UniRule"/>
</dbReference>
<dbReference type="GO" id="GO:0061799">
    <property type="term" value="F:cyclic pyranopterin monophosphate synthase activity"/>
    <property type="evidence" value="ECO:0007669"/>
    <property type="project" value="TreeGrafter"/>
</dbReference>
<dbReference type="GO" id="GO:0061798">
    <property type="term" value="F:GTP 3',8'-cyclase activity"/>
    <property type="evidence" value="ECO:0007669"/>
    <property type="project" value="UniProtKB-UniRule"/>
</dbReference>
<dbReference type="GO" id="GO:0005525">
    <property type="term" value="F:GTP binding"/>
    <property type="evidence" value="ECO:0007669"/>
    <property type="project" value="UniProtKB-UniRule"/>
</dbReference>
<dbReference type="GO" id="GO:0046872">
    <property type="term" value="F:metal ion binding"/>
    <property type="evidence" value="ECO:0007669"/>
    <property type="project" value="UniProtKB-KW"/>
</dbReference>
<dbReference type="GO" id="GO:1904047">
    <property type="term" value="F:S-adenosyl-L-methionine binding"/>
    <property type="evidence" value="ECO:0007669"/>
    <property type="project" value="UniProtKB-UniRule"/>
</dbReference>
<dbReference type="GO" id="GO:0006777">
    <property type="term" value="P:Mo-molybdopterin cofactor biosynthetic process"/>
    <property type="evidence" value="ECO:0007669"/>
    <property type="project" value="UniProtKB-UniRule"/>
</dbReference>
<dbReference type="CDD" id="cd01335">
    <property type="entry name" value="Radical_SAM"/>
    <property type="match status" value="1"/>
</dbReference>
<dbReference type="CDD" id="cd21117">
    <property type="entry name" value="Twitch_MoaA"/>
    <property type="match status" value="1"/>
</dbReference>
<dbReference type="Gene3D" id="3.20.20.70">
    <property type="entry name" value="Aldolase class I"/>
    <property type="match status" value="1"/>
</dbReference>
<dbReference type="HAMAP" id="MF_01225_A">
    <property type="entry name" value="MoaA_A"/>
    <property type="match status" value="1"/>
</dbReference>
<dbReference type="InterPro" id="IPR013785">
    <property type="entry name" value="Aldolase_TIM"/>
</dbReference>
<dbReference type="InterPro" id="IPR006638">
    <property type="entry name" value="Elp3/MiaA/NifB-like_rSAM"/>
</dbReference>
<dbReference type="InterPro" id="IPR013485">
    <property type="entry name" value="MoaA_arc"/>
</dbReference>
<dbReference type="InterPro" id="IPR000385">
    <property type="entry name" value="MoaA_NifB_PqqE_Fe-S-bd_CS"/>
</dbReference>
<dbReference type="InterPro" id="IPR010505">
    <property type="entry name" value="MoaA_twitch"/>
</dbReference>
<dbReference type="InterPro" id="IPR050105">
    <property type="entry name" value="MoCo_biosynth_MoaA/MoaC"/>
</dbReference>
<dbReference type="InterPro" id="IPR007197">
    <property type="entry name" value="rSAM"/>
</dbReference>
<dbReference type="NCBIfam" id="TIGR02668">
    <property type="entry name" value="moaA_archaeal"/>
    <property type="match status" value="1"/>
</dbReference>
<dbReference type="NCBIfam" id="NF001199">
    <property type="entry name" value="PRK00164.2-1"/>
    <property type="match status" value="1"/>
</dbReference>
<dbReference type="PANTHER" id="PTHR22960:SF0">
    <property type="entry name" value="MOLYBDENUM COFACTOR BIOSYNTHESIS PROTEIN 1"/>
    <property type="match status" value="1"/>
</dbReference>
<dbReference type="PANTHER" id="PTHR22960">
    <property type="entry name" value="MOLYBDOPTERIN COFACTOR SYNTHESIS PROTEIN A"/>
    <property type="match status" value="1"/>
</dbReference>
<dbReference type="Pfam" id="PF06463">
    <property type="entry name" value="Mob_synth_C"/>
    <property type="match status" value="1"/>
</dbReference>
<dbReference type="Pfam" id="PF04055">
    <property type="entry name" value="Radical_SAM"/>
    <property type="match status" value="1"/>
</dbReference>
<dbReference type="SFLD" id="SFLDG01383">
    <property type="entry name" value="cyclic_pyranopterin_phosphate"/>
    <property type="match status" value="1"/>
</dbReference>
<dbReference type="SFLD" id="SFLDG01072">
    <property type="entry name" value="dehydrogenase_like"/>
    <property type="match status" value="1"/>
</dbReference>
<dbReference type="SMART" id="SM00729">
    <property type="entry name" value="Elp3"/>
    <property type="match status" value="1"/>
</dbReference>
<dbReference type="SUPFAM" id="SSF102114">
    <property type="entry name" value="Radical SAM enzymes"/>
    <property type="match status" value="1"/>
</dbReference>
<dbReference type="PROSITE" id="PS01305">
    <property type="entry name" value="MOAA_NIFB_PQQE"/>
    <property type="match status" value="1"/>
</dbReference>
<dbReference type="PROSITE" id="PS51918">
    <property type="entry name" value="RADICAL_SAM"/>
    <property type="match status" value="1"/>
</dbReference>
<comment type="function">
    <text evidence="1">Catalyzes the cyclization of GTP to (8S)-3',8-cyclo-7,8-dihydroguanosine 5'-triphosphate.</text>
</comment>
<comment type="catalytic activity">
    <reaction evidence="1">
        <text>GTP + AH2 + S-adenosyl-L-methionine = (8S)-3',8-cyclo-7,8-dihydroguanosine 5'-triphosphate + 5'-deoxyadenosine + L-methionine + A + H(+)</text>
        <dbReference type="Rhea" id="RHEA:49576"/>
        <dbReference type="ChEBI" id="CHEBI:13193"/>
        <dbReference type="ChEBI" id="CHEBI:15378"/>
        <dbReference type="ChEBI" id="CHEBI:17319"/>
        <dbReference type="ChEBI" id="CHEBI:17499"/>
        <dbReference type="ChEBI" id="CHEBI:37565"/>
        <dbReference type="ChEBI" id="CHEBI:57844"/>
        <dbReference type="ChEBI" id="CHEBI:59789"/>
        <dbReference type="ChEBI" id="CHEBI:131766"/>
        <dbReference type="EC" id="4.1.99.22"/>
    </reaction>
</comment>
<comment type="cofactor">
    <cofactor evidence="1">
        <name>[4Fe-4S] cluster</name>
        <dbReference type="ChEBI" id="CHEBI:49883"/>
    </cofactor>
    <text evidence="1">Binds 2 [4Fe-4S] clusters. Binds 1 [4Fe-4S] cluster coordinated with 3 cysteines and an exchangeable S-adenosyl-L-methionine and 1 [4Fe-4S] cluster coordinated with 3 cysteines and the GTP-derived substrate.</text>
</comment>
<comment type="pathway">
    <text evidence="1">Cofactor biosynthesis; molybdopterin biosynthesis.</text>
</comment>
<comment type="similarity">
    <text evidence="1">Belongs to the radical SAM superfamily. MoaA family.</text>
</comment>
<reference key="1">
    <citation type="journal article" date="2008" name="Appl. Environ. Microbiol.">
        <title>The genome sequence of the metal-mobilizing, extremely thermoacidophilic archaeon Metallosphaera sedula provides insights into bioleaching-associated metabolism.</title>
        <authorList>
            <person name="Auernik K.S."/>
            <person name="Maezato Y."/>
            <person name="Blum P.H."/>
            <person name="Kelly R.M."/>
        </authorList>
    </citation>
    <scope>NUCLEOTIDE SEQUENCE [LARGE SCALE GENOMIC DNA]</scope>
    <source>
        <strain>ATCC 51363 / DSM 5348 / JCM 9185 / NBRC 15509 / TH2</strain>
    </source>
</reference>
<sequence>MIDRYGRPLEDLRVTLTHVCNFSCFFCHMEGEDTESMQGLSPHQIGLVSRVAVEFGVKSVKLTGGEPTLRRDLPEIIREIRTSGVRDISMTTNGFLLANIAGKLKDAGLDRINISLHALTREKFKDVTGVDGMDRVIAGIREAKNQGFKPIKLNFVLTKRNSEEAKRVIEFSEEIGIDELHLIELHPVGLGRSTFSFHQGMEELEKEIAKIAVKSEIREKHFRPRYTLPSGLVVEIVKPYANPIFCAGCNRVRLTVDGKLKTCLYRDDKVIDVMYALSNKDLTLEERLELIRHGFEAAISIREPNFKYMMKIEAQQA</sequence>
<organism>
    <name type="scientific">Metallosphaera sedula (strain ATCC 51363 / DSM 5348 / JCM 9185 / NBRC 15509 / TH2)</name>
    <dbReference type="NCBI Taxonomy" id="399549"/>
    <lineage>
        <taxon>Archaea</taxon>
        <taxon>Thermoproteota</taxon>
        <taxon>Thermoprotei</taxon>
        <taxon>Sulfolobales</taxon>
        <taxon>Sulfolobaceae</taxon>
        <taxon>Metallosphaera</taxon>
    </lineage>
</organism>